<comment type="function">
    <text evidence="1">Catalyzes the condensation of acetyl-CoA with acetoacetyl-CoA to form 3-hydroxy-3-methylglutaryl-CoA (HMG-CoA). Functions in the mevalonate (MVA) pathway leading to isopentenyl diphosphate (IPP), a key precursor for the biosynthesis of isoprenoid compounds that are building blocks of archaeal membrane lipids.</text>
</comment>
<comment type="catalytic activity">
    <reaction evidence="1">
        <text>acetoacetyl-CoA + acetyl-CoA + H2O = (3S)-3-hydroxy-3-methylglutaryl-CoA + CoA + H(+)</text>
        <dbReference type="Rhea" id="RHEA:10188"/>
        <dbReference type="ChEBI" id="CHEBI:15377"/>
        <dbReference type="ChEBI" id="CHEBI:15378"/>
        <dbReference type="ChEBI" id="CHEBI:43074"/>
        <dbReference type="ChEBI" id="CHEBI:57286"/>
        <dbReference type="ChEBI" id="CHEBI:57287"/>
        <dbReference type="ChEBI" id="CHEBI:57288"/>
        <dbReference type="EC" id="2.3.3.10"/>
    </reaction>
    <physiologicalReaction direction="left-to-right" evidence="1">
        <dbReference type="Rhea" id="RHEA:10189"/>
    </physiologicalReaction>
</comment>
<comment type="pathway">
    <text evidence="1">Metabolic intermediate biosynthesis; (R)-mevalonate biosynthesis; (R)-mevalonate from acetyl-CoA: step 2/3.</text>
</comment>
<comment type="subunit">
    <text evidence="1">Interacts with acetoacetyl-CoA thiolase that catalyzes the precedent step in the pathway and with a DUF35 protein. The acetoacetyl-CoA thiolase/HMG-CoA synthase complex channels the intermediate via a fused CoA-binding site, which allows for efficient coupling of the endergonic thiolase reaction with the exergonic HMGCS reaction.</text>
</comment>
<comment type="similarity">
    <text evidence="1">Belongs to the thiolase-like superfamily. Archaeal HMG-CoA synthase family.</text>
</comment>
<keyword id="KW-0012">Acyltransferase</keyword>
<keyword id="KW-0414">Isoprene biosynthesis</keyword>
<keyword id="KW-1185">Reference proteome</keyword>
<keyword id="KW-0808">Transferase</keyword>
<evidence type="ECO:0000255" key="1">
    <source>
        <dbReference type="HAMAP-Rule" id="MF_01409"/>
    </source>
</evidence>
<name>HMGCS_CALMQ</name>
<sequence length="349" mass="37943">MAVGIVGWGAYIPRYRIKTREIAEAWGDDALRIRDMYLVEEKAVGYIDEDPVTMAVEASRDALIRAGVKPSEVGAVFAGTESKPYAVKPISSILIDALGLNRQVYSVDMEFACKAGSDAIINLMGLVKANSIKYGIAVGTDSSQGEPGEHLEYTVGTGAVAYVIGSSNLAAEIKYTYPYASDTPDFWRRDSSPYPVHGEGFTGEPAYFKHIIGAAKGLMDELGMKPNDFDYAVFHQPNARFPVRVAQMLGFPLEKVKPGIVVDLIGNTYNASALLGLAKVLEEAKPGAKIIVVTFGSGAGSNAFYIETTDQLPGKVKLARTIGEMLEDKVYIDYSLYLKYRKIIKMIHG</sequence>
<reference key="1">
    <citation type="submission" date="2007-10" db="EMBL/GenBank/DDBJ databases">
        <title>Complete sequence of Caldivirga maquilingensis IC-167.</title>
        <authorList>
            <consortium name="US DOE Joint Genome Institute"/>
            <person name="Copeland A."/>
            <person name="Lucas S."/>
            <person name="Lapidus A."/>
            <person name="Barry K."/>
            <person name="Glavina del Rio T."/>
            <person name="Dalin E."/>
            <person name="Tice H."/>
            <person name="Pitluck S."/>
            <person name="Saunders E."/>
            <person name="Brettin T."/>
            <person name="Bruce D."/>
            <person name="Detter J.C."/>
            <person name="Han C."/>
            <person name="Schmutz J."/>
            <person name="Larimer F."/>
            <person name="Land M."/>
            <person name="Hauser L."/>
            <person name="Kyrpides N."/>
            <person name="Ivanova N."/>
            <person name="Biddle J.F."/>
            <person name="Zhang Z."/>
            <person name="Fitz-Gibbon S.T."/>
            <person name="Lowe T.M."/>
            <person name="Saltikov C."/>
            <person name="House C.H."/>
            <person name="Richardson P."/>
        </authorList>
    </citation>
    <scope>NUCLEOTIDE SEQUENCE [LARGE SCALE GENOMIC DNA]</scope>
    <source>
        <strain>ATCC 700844 / DSM 13496 / JCM 10307 / IC-167</strain>
    </source>
</reference>
<dbReference type="EC" id="2.3.3.10" evidence="1"/>
<dbReference type="EMBL" id="CP000852">
    <property type="protein sequence ID" value="ABW02067.1"/>
    <property type="molecule type" value="Genomic_DNA"/>
</dbReference>
<dbReference type="RefSeq" id="WP_012186286.1">
    <property type="nucleotide sequence ID" value="NC_009954.1"/>
</dbReference>
<dbReference type="SMR" id="A8ME61"/>
<dbReference type="STRING" id="397948.Cmaq_1240"/>
<dbReference type="GeneID" id="5709542"/>
<dbReference type="KEGG" id="cma:Cmaq_1240"/>
<dbReference type="eggNOG" id="arCOG01767">
    <property type="taxonomic scope" value="Archaea"/>
</dbReference>
<dbReference type="HOGENOM" id="CLU_039592_7_0_2"/>
<dbReference type="OrthoDB" id="5812at2157"/>
<dbReference type="UniPathway" id="UPA00058">
    <property type="reaction ID" value="UER00102"/>
</dbReference>
<dbReference type="Proteomes" id="UP000001137">
    <property type="component" value="Chromosome"/>
</dbReference>
<dbReference type="GO" id="GO:0003985">
    <property type="term" value="F:acetyl-CoA C-acetyltransferase activity"/>
    <property type="evidence" value="ECO:0007669"/>
    <property type="project" value="UniProtKB-UniRule"/>
</dbReference>
<dbReference type="GO" id="GO:0004421">
    <property type="term" value="F:hydroxymethylglutaryl-CoA synthase activity"/>
    <property type="evidence" value="ECO:0007669"/>
    <property type="project" value="InterPro"/>
</dbReference>
<dbReference type="GO" id="GO:0010142">
    <property type="term" value="P:farnesyl diphosphate biosynthetic process, mevalonate pathway"/>
    <property type="evidence" value="ECO:0007669"/>
    <property type="project" value="TreeGrafter"/>
</dbReference>
<dbReference type="GO" id="GO:0019287">
    <property type="term" value="P:isopentenyl diphosphate biosynthetic process, mevalonate pathway"/>
    <property type="evidence" value="ECO:0007669"/>
    <property type="project" value="UniProtKB-UniRule"/>
</dbReference>
<dbReference type="CDD" id="cd00827">
    <property type="entry name" value="init_cond_enzymes"/>
    <property type="match status" value="1"/>
</dbReference>
<dbReference type="Gene3D" id="3.40.47.10">
    <property type="match status" value="1"/>
</dbReference>
<dbReference type="HAMAP" id="MF_01409">
    <property type="entry name" value="HMG_CoA_synth_arch"/>
    <property type="match status" value="1"/>
</dbReference>
<dbReference type="InterPro" id="IPR013747">
    <property type="entry name" value="ACP_syn_III_C"/>
</dbReference>
<dbReference type="InterPro" id="IPR004656">
    <property type="entry name" value="HMG_CoA_Synthase"/>
</dbReference>
<dbReference type="InterPro" id="IPR016039">
    <property type="entry name" value="Thiolase-like"/>
</dbReference>
<dbReference type="InterPro" id="IPR020616">
    <property type="entry name" value="Thiolase_N"/>
</dbReference>
<dbReference type="NCBIfam" id="TIGR00748">
    <property type="entry name" value="HMG_CoA_syn_Arc"/>
    <property type="match status" value="1"/>
</dbReference>
<dbReference type="NCBIfam" id="NF003274">
    <property type="entry name" value="PRK04262.1"/>
    <property type="match status" value="1"/>
</dbReference>
<dbReference type="PANTHER" id="PTHR43323">
    <property type="entry name" value="3-HYDROXY-3-METHYLGLUTARYL COENZYME A SYNTHASE"/>
    <property type="match status" value="1"/>
</dbReference>
<dbReference type="PANTHER" id="PTHR43323:SF2">
    <property type="entry name" value="HYDROXYMETHYLGLUTARYL-COA SYNTHASE"/>
    <property type="match status" value="1"/>
</dbReference>
<dbReference type="Pfam" id="PF08541">
    <property type="entry name" value="ACP_syn_III_C"/>
    <property type="match status" value="1"/>
</dbReference>
<dbReference type="Pfam" id="PF00108">
    <property type="entry name" value="Thiolase_N"/>
    <property type="match status" value="1"/>
</dbReference>
<dbReference type="SUPFAM" id="SSF53901">
    <property type="entry name" value="Thiolase-like"/>
    <property type="match status" value="2"/>
</dbReference>
<proteinExistence type="inferred from homology"/>
<protein>
    <recommendedName>
        <fullName evidence="1">Hydroxymethylglutaryl-CoA synthase</fullName>
        <shortName evidence="1">HMG-CoA synthase</shortName>
        <shortName evidence="1">HMGCS</shortName>
        <ecNumber evidence="1">2.3.3.10</ecNumber>
    </recommendedName>
</protein>
<gene>
    <name type="ordered locus">Cmaq_1240</name>
</gene>
<feature type="chain" id="PRO_1000184608" description="Hydroxymethylglutaryl-CoA synthase">
    <location>
        <begin position="1"/>
        <end position="349"/>
    </location>
</feature>
<feature type="active site" description="Proton donor/acceptor" evidence="1">
    <location>
        <position position="81"/>
    </location>
</feature>
<feature type="active site" description="Acyl-thioester intermediate" evidence="1">
    <location>
        <position position="113"/>
    </location>
</feature>
<feature type="active site" description="Proton donor/acceptor" evidence="1">
    <location>
        <position position="235"/>
    </location>
</feature>
<feature type="binding site" evidence="1">
    <location>
        <position position="29"/>
    </location>
    <ligand>
        <name>(3S)-3-hydroxy-3-methylglutaryl-CoA</name>
        <dbReference type="ChEBI" id="CHEBI:43074"/>
    </ligand>
</feature>
<feature type="binding site" evidence="1">
    <location>
        <position position="30"/>
    </location>
    <ligand>
        <name>(3S)-3-hydroxy-3-methylglutaryl-CoA</name>
        <dbReference type="ChEBI" id="CHEBI:43074"/>
    </ligand>
</feature>
<feature type="binding site" evidence="1">
    <location>
        <position position="113"/>
    </location>
    <ligand>
        <name>(3S)-3-hydroxy-3-methylglutaryl-CoA</name>
        <dbReference type="ChEBI" id="CHEBI:43074"/>
    </ligand>
</feature>
<feature type="binding site" evidence="1">
    <location>
        <position position="154"/>
    </location>
    <ligand>
        <name>(3S)-3-hydroxy-3-methylglutaryl-CoA</name>
        <dbReference type="ChEBI" id="CHEBI:43074"/>
    </ligand>
</feature>
<feature type="binding site" evidence="1">
    <location>
        <position position="202"/>
    </location>
    <ligand>
        <name>(3S)-3-hydroxy-3-methylglutaryl-CoA</name>
        <dbReference type="ChEBI" id="CHEBI:43074"/>
    </ligand>
</feature>
<feature type="binding site" evidence="1">
    <location>
        <position position="235"/>
    </location>
    <ligand>
        <name>(3S)-3-hydroxy-3-methylglutaryl-CoA</name>
        <dbReference type="ChEBI" id="CHEBI:43074"/>
    </ligand>
</feature>
<feature type="binding site" evidence="1">
    <location>
        <position position="240"/>
    </location>
    <ligand>
        <name>CoA</name>
        <dbReference type="ChEBI" id="CHEBI:57287"/>
        <note>ligand shared with acetoacetyl-CoA thiolase</note>
    </ligand>
</feature>
<feature type="binding site" evidence="1">
    <location>
        <position position="244"/>
    </location>
    <ligand>
        <name>(3S)-3-hydroxy-3-methylglutaryl-CoA</name>
        <dbReference type="ChEBI" id="CHEBI:43074"/>
    </ligand>
</feature>
<feature type="binding site" evidence="1">
    <location>
        <position position="267"/>
    </location>
    <ligand>
        <name>(3S)-3-hydroxy-3-methylglutaryl-CoA</name>
        <dbReference type="ChEBI" id="CHEBI:43074"/>
    </ligand>
</feature>
<feature type="binding site" evidence="1">
    <location>
        <position position="297"/>
    </location>
    <ligand>
        <name>(3S)-3-hydroxy-3-methylglutaryl-CoA</name>
        <dbReference type="ChEBI" id="CHEBI:43074"/>
    </ligand>
</feature>
<organism>
    <name type="scientific">Caldivirga maquilingensis (strain ATCC 700844 / DSM 13496 / JCM 10307 / IC-167)</name>
    <dbReference type="NCBI Taxonomy" id="397948"/>
    <lineage>
        <taxon>Archaea</taxon>
        <taxon>Thermoproteota</taxon>
        <taxon>Thermoprotei</taxon>
        <taxon>Thermoproteales</taxon>
        <taxon>Thermoproteaceae</taxon>
        <taxon>Caldivirga</taxon>
    </lineage>
</organism>
<accession>A8ME61</accession>